<accession>Q5IS56</accession>
<dbReference type="EMBL" id="AY665272">
    <property type="protein sequence ID" value="AAV74310.1"/>
    <property type="molecule type" value="mRNA"/>
</dbReference>
<dbReference type="RefSeq" id="NP_001029362.1">
    <property type="nucleotide sequence ID" value="NM_001034190.1"/>
</dbReference>
<dbReference type="SMR" id="Q5IS56"/>
<dbReference type="FunCoup" id="Q5IS56">
    <property type="interactions" value="1728"/>
</dbReference>
<dbReference type="STRING" id="9598.ENSPTRP00000032656"/>
<dbReference type="PaxDb" id="9598-ENSPTRP00000032656"/>
<dbReference type="GeneID" id="463369"/>
<dbReference type="CTD" id="2737"/>
<dbReference type="eggNOG" id="KOG1721">
    <property type="taxonomic scope" value="Eukaryota"/>
</dbReference>
<dbReference type="InParanoid" id="Q5IS56"/>
<dbReference type="Proteomes" id="UP000002277">
    <property type="component" value="Unplaced"/>
</dbReference>
<dbReference type="GO" id="GO:0005929">
    <property type="term" value="C:cilium"/>
    <property type="evidence" value="ECO:0007669"/>
    <property type="project" value="UniProtKB-SubCell"/>
</dbReference>
<dbReference type="GO" id="GO:0005737">
    <property type="term" value="C:cytoplasm"/>
    <property type="evidence" value="ECO:0000250"/>
    <property type="project" value="UniProtKB"/>
</dbReference>
<dbReference type="GO" id="GO:0005634">
    <property type="term" value="C:nucleus"/>
    <property type="evidence" value="ECO:0000250"/>
    <property type="project" value="UniProtKB"/>
</dbReference>
<dbReference type="GO" id="GO:0003700">
    <property type="term" value="F:DNA-binding transcription factor activity"/>
    <property type="evidence" value="ECO:0000250"/>
    <property type="project" value="UniProtKB"/>
</dbReference>
<dbReference type="GO" id="GO:0000981">
    <property type="term" value="F:DNA-binding transcription factor activity, RNA polymerase II-specific"/>
    <property type="evidence" value="ECO:0000318"/>
    <property type="project" value="GO_Central"/>
</dbReference>
<dbReference type="GO" id="GO:0000978">
    <property type="term" value="F:RNA polymerase II cis-regulatory region sequence-specific DNA binding"/>
    <property type="evidence" value="ECO:0000318"/>
    <property type="project" value="GO_Central"/>
</dbReference>
<dbReference type="GO" id="GO:0008270">
    <property type="term" value="F:zinc ion binding"/>
    <property type="evidence" value="ECO:0007669"/>
    <property type="project" value="UniProtKB-KW"/>
</dbReference>
<dbReference type="GO" id="GO:0045893">
    <property type="term" value="P:positive regulation of DNA-templated transcription"/>
    <property type="evidence" value="ECO:0000250"/>
    <property type="project" value="UniProtKB"/>
</dbReference>
<dbReference type="GO" id="GO:0006357">
    <property type="term" value="P:regulation of transcription by RNA polymerase II"/>
    <property type="evidence" value="ECO:0000318"/>
    <property type="project" value="GO_Central"/>
</dbReference>
<dbReference type="GO" id="GO:0007224">
    <property type="term" value="P:smoothened signaling pathway"/>
    <property type="evidence" value="ECO:0000318"/>
    <property type="project" value="GO_Central"/>
</dbReference>
<dbReference type="FunFam" id="3.30.160.60:FF:000019">
    <property type="entry name" value="GLI family zinc finger 3"/>
    <property type="match status" value="1"/>
</dbReference>
<dbReference type="FunFam" id="3.30.160.60:FF:000031">
    <property type="entry name" value="GLI family zinc finger 3"/>
    <property type="match status" value="1"/>
</dbReference>
<dbReference type="FunFam" id="3.30.160.60:FF:000036">
    <property type="entry name" value="GLI family zinc finger 3"/>
    <property type="match status" value="1"/>
</dbReference>
<dbReference type="FunFam" id="3.30.160.60:FF:000048">
    <property type="entry name" value="GLI family zinc finger 3"/>
    <property type="match status" value="1"/>
</dbReference>
<dbReference type="FunFam" id="3.30.160.60:FF:000068">
    <property type="entry name" value="GLI family zinc finger 3"/>
    <property type="match status" value="1"/>
</dbReference>
<dbReference type="Gene3D" id="3.30.160.60">
    <property type="entry name" value="Classic Zinc Finger"/>
    <property type="match status" value="5"/>
</dbReference>
<dbReference type="InterPro" id="IPR043359">
    <property type="entry name" value="GLI-like"/>
</dbReference>
<dbReference type="InterPro" id="IPR056436">
    <property type="entry name" value="Znf-C2H2_ZIC1-5/GLI1-3-like"/>
</dbReference>
<dbReference type="InterPro" id="IPR036236">
    <property type="entry name" value="Znf_C2H2_sf"/>
</dbReference>
<dbReference type="InterPro" id="IPR013087">
    <property type="entry name" value="Znf_C2H2_type"/>
</dbReference>
<dbReference type="PANTHER" id="PTHR45718">
    <property type="entry name" value="TRANSCRIPTIONAL ACTIVATOR CUBITUS INTERRUPTUS"/>
    <property type="match status" value="1"/>
</dbReference>
<dbReference type="PANTHER" id="PTHR45718:SF5">
    <property type="entry name" value="TRANSCRIPTIONAL ACTIVATOR GLI3"/>
    <property type="match status" value="1"/>
</dbReference>
<dbReference type="Pfam" id="PF00096">
    <property type="entry name" value="zf-C2H2"/>
    <property type="match status" value="2"/>
</dbReference>
<dbReference type="Pfam" id="PF23561">
    <property type="entry name" value="zf-C2H2_15"/>
    <property type="match status" value="1"/>
</dbReference>
<dbReference type="SMART" id="SM00355">
    <property type="entry name" value="ZnF_C2H2"/>
    <property type="match status" value="5"/>
</dbReference>
<dbReference type="SUPFAM" id="SSF57667">
    <property type="entry name" value="beta-beta-alpha zinc fingers"/>
    <property type="match status" value="3"/>
</dbReference>
<dbReference type="PROSITE" id="PS00028">
    <property type="entry name" value="ZINC_FINGER_C2H2_1"/>
    <property type="match status" value="4"/>
</dbReference>
<dbReference type="PROSITE" id="PS50157">
    <property type="entry name" value="ZINC_FINGER_C2H2_2"/>
    <property type="match status" value="5"/>
</dbReference>
<sequence>MEAQSHSSTTTEKKKVENSIVKCSTRTDVSEKAVASSTTSNEDESPGQTYHRERRNAITMQPQNVQGLSKVSEEPSTSSDERASLIKKEIHGSLPHVAEPSVPYRGTVFAMDPRNGYMEPHYHPPHLFPAFHPPVPIDARHHEGRYHYDPSPIPPLHMTSALSSSPTYPDLPFIRISPHRNPAAASESPFSPPHPYINPYMDYIRSLHSSPSLSMISATRGLSPTDAPHAGVSPAEYYHQMALLTGQRSPYADIIPSAATAGTGAIHMEYLHAMDSTRFPSPRLSARPSRKRTLSISPLSDHSFDLQTMIRTSPNSLVTILNNSRSSSSASGSYGHLSASAISPALSFTYSSAPVSLHMHQQILSRQQSLGSAFGHSPPLIHPAPTFPTQRPIPGIPTVLNPVQVSSGPSESSQNKPTSESAVSSTGDPMHNKRSKIKPDEDLPSPGARGQQEQPEGTTLVKEEGDKDESKQEPEVIYETNCHWEGCAREFDTQEQLVHHINNDHIHGEKKEFVCRWLDCSREQKPFKAQYMLVVHMRRHTGEKPHKCTFEGCTKAYSRLENLKTHLRSHTGEKPYVCEHEGCNKAFSNASDRAKHQNRTHSNEKPYVCKIPGCTKRYTDPSSLRKHVKTVHGPEAHVTKKQRGDIHPRPPPPRDSGSHSQSRSPGRPTQGALGEQQDLSNTTSKREECLQVKTVKAEKPMTSQPSPGGQSSCSSQQSPISNYSNSGLELPLTDGGSIGDLSAIDETPIMDSTISTATTALALQARRNPAGTKWMEHVKLERLKQVNGMFPRLNPILPPKAPAVSPLIGNGTQSNNTCSLGGPMTLLPGRSDLSGVDVTMLNMLNRRDSSASTISSAYLSSRRSSGISPCFSSRRSSEASQAEGRPQNVSVADSYDPISTDASRRSSEASQSDGLPSLLSLTPAQQYRLKAKYAAATGGPPPTPLPNMERMSLKTRLALLGDALEPGVALPPVHAPRRCSDGGAHGYGRRHLQPHDAPGHGVRRASDPVRTGSEGLALPRVPRFSSLSSCNPPAMATSAEKRSLVLQNYTRPEGGQSRNFHSSPCPPSITENVTLESLTMDADANLNDEDFLPDDVVQYLNSQNQAGYEQHFPSTLPDDSKVPHGPGDFDAPGLPDSHAGQQFHALEQPCPEGSKTDLPIQWNEVSSGSADLSSSKLKCGPRPAVPQTRAFGFCNGMVVHPQNPLRSGPAGGYQTLGENSNPYGGPEHLMLHNSPGSGTSGNAFHEQPCKAPQYGNCLNRQPVAPGALDGACGAGIQASKLKSTPMQGSGGQLNFGLPVAPNESAGSMVNGMQNQDPVGQGYLAHQLLGDSMQHPGAGRPGQQMLGQISATSHINIYQGPESCLPGAHGMGSQPSSLAVVRGYQPCASFGGSRRQAMPRDSLALQSGQLSDTSQTCRVNGIKMEMKGQPHPLCSNLQNYSGQFYDQTVGFSQQDTKAGSFSISDASCLLQGTSAKNSELLSPGANQVTSTVDSLDSHDLEGVQIDFDAIIDDGDHSSLMSGALSPSIIQNLSYSSSRLTTPRASLPFPALSMSTTNMAIGDMSSLLTSLAEESKFLAVMQ</sequence>
<protein>
    <recommendedName>
        <fullName>Transcriptional activator GLI3</fullName>
    </recommendedName>
    <alternativeName>
        <fullName>GLI3 form of 190 kDa</fullName>
        <shortName>GLI3-190</shortName>
    </alternativeName>
    <alternativeName>
        <fullName>GLI3 full-length protein</fullName>
        <shortName>GLI3FL</shortName>
    </alternativeName>
    <component>
        <recommendedName>
            <fullName>Transcriptional repressor GLI3R</fullName>
        </recommendedName>
        <alternativeName>
            <fullName>GLI3 C-terminally truncated form</fullName>
        </alternativeName>
        <alternativeName>
            <fullName>GLI3 form of 83 kDa</fullName>
            <shortName>GLI3-83</shortName>
        </alternativeName>
    </component>
</protein>
<comment type="function">
    <text evidence="1">Has a dual function as a transcriptional activator and a repressor of the sonic hedgehog (Shh) pathway, and plays a role in limb development. The full-length GLI3 form (GLI3FL) after phosphorylation and nuclear translocation, acts as an activator (GLI3A) while GLI3R, its C-terminally truncated form, acts as a repressor. A proper balance between the GLI3 activator and the repressor GLI3R, rather than the repressor gradient itself or the activator/repressor ratio gradient, specifies limb digit number and identity. In concert with TRPS1, plays a role in regulating the size of the zone of distal chondrocytes, in restricting the zone of PTHLH expression in distal cells and in activating chondrocyte proliferation. Binds to the minimal GLI-consensus sequence 5'-GGGTGGTC-3'. Plays a role in limb and brain development (By similarity).</text>
</comment>
<comment type="subunit">
    <text evidence="2 3">The full-length GLI3 form (GLI3FL) interacts with SUFU and this interaction regulates the formation of either repressor or activator forms of GLI3. Its association with SUFU is regulated by Hh signaling and dissociation of the SUFU-GLI3 interaction requires the presence of the ciliary motor KIF3A (By similarity). Interacts with KIF7. The activator form of GLI3 (GLI3A) but not the repressor form (GLI3R) can interact with TRPS1. The phosphorylated form interacts with BTRC. Interacts with ZIC1. Interacts with ZIC3 (via C2H2-type domains 3, 4 and 5); the interaction enhances its transcriptional activity (By similarity). Interacts with WRD11; the interaction associates EMX1 with GLI3 (By similarity). Interacts with DZIP1; retains GLI3 within the cytoplasm (By similarity).</text>
</comment>
<comment type="subcellular location">
    <subcellularLocation>
        <location>Nucleus</location>
    </subcellularLocation>
    <subcellularLocation>
        <location evidence="1">Cytoplasm</location>
    </subcellularLocation>
    <subcellularLocation>
        <location evidence="1">Cell projection</location>
        <location evidence="1">Cilium</location>
    </subcellularLocation>
    <text evidence="1">GLI3FL is localized predominantly in the cytoplasm while GLI3R resides mainly in the nucleus. Ciliary accumulation requires the presence of KIF7 and SMO. Translocation to the nucleus is promoted by interaction with ZIC1 (By similarity).</text>
</comment>
<comment type="PTM">
    <text evidence="1">Phosphorylated on multiple sites by protein kinase A (PKA) and phosphorylation by PKA primes further phosphorylation by CK1 and GSK3. Phosphorylated by DYRK2 (in vitro). Phosphorylation is essential for its proteolytic processing (By similarity).</text>
</comment>
<comment type="PTM">
    <text evidence="1">Transcriptional repressor GLI3R, a C-terminally truncated form, is generated from the full-length GLI3 protein (GLI3FL/GLI3-190) through proteolytic processing. This process requires PKA-primed phosphorylation of GLI3, ubiquitination of GLI3 and the presence of BTRC. GLI3FL is complexed with SUFU in the cytoplasm and is maintained in a neutral state. Without the Hh signal, the SUFU-GLI3 complex is recruited to cilia, leading to the efficient processing of GLI3FL into GLI3R. GLI3R formation leads to its dissociation from SUFU, allowing it to translocate into the nucleus, and repress Hh target genes. When Hh signaling is initiated, SUFU dissociates from GLI3FL and this has two consequences. First, GLI3R production is halted. Second, free GLI3FL translocates to the nucleus, where it is phosphorylated, destabilized, and converted to a transcriptional activator (GLI3A). Phosphorylated in vitro by ULK3 (By similarity).</text>
</comment>
<comment type="similarity">
    <text evidence="6">Belongs to the GLI C2H2-type zinc-finger protein family.</text>
</comment>
<organism>
    <name type="scientific">Pan troglodytes</name>
    <name type="common">Chimpanzee</name>
    <dbReference type="NCBI Taxonomy" id="9598"/>
    <lineage>
        <taxon>Eukaryota</taxon>
        <taxon>Metazoa</taxon>
        <taxon>Chordata</taxon>
        <taxon>Craniata</taxon>
        <taxon>Vertebrata</taxon>
        <taxon>Euteleostomi</taxon>
        <taxon>Mammalia</taxon>
        <taxon>Eutheria</taxon>
        <taxon>Euarchontoglires</taxon>
        <taxon>Primates</taxon>
        <taxon>Haplorrhini</taxon>
        <taxon>Catarrhini</taxon>
        <taxon>Hominidae</taxon>
        <taxon>Pan</taxon>
    </lineage>
</organism>
<reference key="1">
    <citation type="journal article" date="2004" name="Cell">
        <title>Accelerated evolution of nervous system genes in the origin of Homo sapiens.</title>
        <authorList>
            <person name="Dorus S."/>
            <person name="Vallender E.J."/>
            <person name="Evans P.D."/>
            <person name="Anderson J.R."/>
            <person name="Gilbert S.L."/>
            <person name="Mahowald M."/>
            <person name="Wyckoff G.J."/>
            <person name="Malcom C.M."/>
            <person name="Lahn B.T."/>
        </authorList>
    </citation>
    <scope>NUCLEOTIDE SEQUENCE [MRNA]</scope>
</reference>
<gene>
    <name type="primary">GLI3</name>
</gene>
<evidence type="ECO:0000250" key="1"/>
<evidence type="ECO:0000250" key="2">
    <source>
        <dbReference type="UniProtKB" id="P10071"/>
    </source>
</evidence>
<evidence type="ECO:0000250" key="3">
    <source>
        <dbReference type="UniProtKB" id="Q61602"/>
    </source>
</evidence>
<evidence type="ECO:0000255" key="4">
    <source>
        <dbReference type="PROSITE-ProRule" id="PRU00042"/>
    </source>
</evidence>
<evidence type="ECO:0000256" key="5">
    <source>
        <dbReference type="SAM" id="MobiDB-lite"/>
    </source>
</evidence>
<evidence type="ECO:0000305" key="6"/>
<proteinExistence type="evidence at transcript level"/>
<name>GLI3_PANTR</name>
<keyword id="KW-0007">Acetylation</keyword>
<keyword id="KW-0010">Activator</keyword>
<keyword id="KW-0966">Cell projection</keyword>
<keyword id="KW-0969">Cilium</keyword>
<keyword id="KW-0963">Cytoplasm</keyword>
<keyword id="KW-0238">DNA-binding</keyword>
<keyword id="KW-1017">Isopeptide bond</keyword>
<keyword id="KW-0479">Metal-binding</keyword>
<keyword id="KW-0488">Methylation</keyword>
<keyword id="KW-0539">Nucleus</keyword>
<keyword id="KW-0597">Phosphoprotein</keyword>
<keyword id="KW-1185">Reference proteome</keyword>
<keyword id="KW-0677">Repeat</keyword>
<keyword id="KW-0678">Repressor</keyword>
<keyword id="KW-0804">Transcription</keyword>
<keyword id="KW-0805">Transcription regulation</keyword>
<keyword id="KW-0832">Ubl conjugation</keyword>
<keyword id="KW-0862">Zinc</keyword>
<keyword id="KW-0863">Zinc-finger</keyword>
<feature type="chain" id="PRO_0000047204" description="Transcriptional activator GLI3">
    <location>
        <begin position="1"/>
        <end position="1580"/>
    </location>
</feature>
<feature type="chain" id="PRO_0000406139" description="Transcriptional repressor GLI3R">
    <location>
        <begin position="1"/>
        <end status="unknown"/>
    </location>
</feature>
<feature type="zinc finger region" description="C2H2-type 1" evidence="4">
    <location>
        <begin position="480"/>
        <end position="505"/>
    </location>
</feature>
<feature type="zinc finger region" description="C2H2-type 2" evidence="4">
    <location>
        <begin position="513"/>
        <end position="540"/>
    </location>
</feature>
<feature type="zinc finger region" description="C2H2-type 3" evidence="4">
    <location>
        <begin position="546"/>
        <end position="570"/>
    </location>
</feature>
<feature type="zinc finger region" description="C2H2-type 4" evidence="4">
    <location>
        <begin position="576"/>
        <end position="601"/>
    </location>
</feature>
<feature type="zinc finger region" description="C2H2-type 5" evidence="4">
    <location>
        <begin position="607"/>
        <end position="632"/>
    </location>
</feature>
<feature type="region of interest" description="Disordered" evidence="5">
    <location>
        <begin position="1"/>
        <end position="79"/>
    </location>
</feature>
<feature type="region of interest" description="Disordered" evidence="5">
    <location>
        <begin position="368"/>
        <end position="475"/>
    </location>
</feature>
<feature type="region of interest" description="Disordered" evidence="5">
    <location>
        <begin position="620"/>
        <end position="728"/>
    </location>
</feature>
<feature type="region of interest" description="Mediates interaction with DZIP1" evidence="3">
    <location>
        <begin position="745"/>
        <end position="845"/>
    </location>
</feature>
<feature type="region of interest" description="Disordered" evidence="5">
    <location>
        <begin position="863"/>
        <end position="918"/>
    </location>
</feature>
<feature type="region of interest" description="Disordered" evidence="5">
    <location>
        <begin position="981"/>
        <end position="1042"/>
    </location>
</feature>
<feature type="compositionally biased region" description="Polar residues" evidence="5">
    <location>
        <begin position="1"/>
        <end position="10"/>
    </location>
</feature>
<feature type="compositionally biased region" description="Polar residues" evidence="5">
    <location>
        <begin position="58"/>
        <end position="78"/>
    </location>
</feature>
<feature type="compositionally biased region" description="Polar residues" evidence="5">
    <location>
        <begin position="401"/>
        <end position="427"/>
    </location>
</feature>
<feature type="compositionally biased region" description="Basic and acidic residues" evidence="5">
    <location>
        <begin position="461"/>
        <end position="474"/>
    </location>
</feature>
<feature type="compositionally biased region" description="Basic and acidic residues" evidence="5">
    <location>
        <begin position="632"/>
        <end position="648"/>
    </location>
</feature>
<feature type="compositionally biased region" description="Basic and acidic residues" evidence="5">
    <location>
        <begin position="684"/>
        <end position="699"/>
    </location>
</feature>
<feature type="compositionally biased region" description="Low complexity" evidence="5">
    <location>
        <begin position="703"/>
        <end position="726"/>
    </location>
</feature>
<feature type="compositionally biased region" description="Low complexity" evidence="5">
    <location>
        <begin position="863"/>
        <end position="882"/>
    </location>
</feature>
<feature type="compositionally biased region" description="Polar residues" evidence="5">
    <location>
        <begin position="908"/>
        <end position="918"/>
    </location>
</feature>
<feature type="modified residue" description="N-acetylmethionine" evidence="2">
    <location>
        <position position="1"/>
    </location>
</feature>
<feature type="modified residue" description="Omega-N-methylarginine" evidence="3">
    <location>
        <position position="175"/>
    </location>
</feature>
<feature type="modified residue" description="Phosphoserine" evidence="2">
    <location>
        <position position="664"/>
    </location>
</feature>
<feature type="modified residue" description="Phosphoserine; by PKA" evidence="2">
    <location>
        <position position="849"/>
    </location>
</feature>
<feature type="modified residue" description="Phosphoserine; by PKA" evidence="2">
    <location>
        <position position="865"/>
    </location>
</feature>
<feature type="modified residue" description="Phosphoserine; by PKA" evidence="2">
    <location>
        <position position="877"/>
    </location>
</feature>
<feature type="modified residue" description="Phosphoserine; by PKA" evidence="2">
    <location>
        <position position="907"/>
    </location>
</feature>
<feature type="modified residue" description="Phosphoserine; by PKA" evidence="2">
    <location>
        <position position="980"/>
    </location>
</feature>
<feature type="modified residue" description="Phosphoserine; by PKA" evidence="2">
    <location>
        <position position="1006"/>
    </location>
</feature>
<feature type="cross-link" description="Glycyl lysine isopeptide (Lys-Gly) (interchain with G-Cter in SUMO2)" evidence="2">
    <location>
        <position position="438"/>
    </location>
</feature>
<feature type="cross-link" description="Glycyl lysine isopeptide (Lys-Gly) (interchain with G-Cter in SUMO2)" evidence="2">
    <location>
        <position position="462"/>
    </location>
</feature>
<feature type="cross-link" description="Glycyl lysine isopeptide (Lys-Gly) (interchain with G-Cter in ubiquitin)" evidence="2">
    <location>
        <position position="773"/>
    </location>
</feature>
<feature type="cross-link" description="Glycyl lysine isopeptide (Lys-Gly) (interchain with G-Cter in SUMO2); alternate" evidence="2">
    <location>
        <position position="779"/>
    </location>
</feature>
<feature type="cross-link" description="Glycyl lysine isopeptide (Lys-Gly) (interchain with G-Cter in ubiquitin); alternate" evidence="2">
    <location>
        <position position="779"/>
    </location>
</feature>
<feature type="cross-link" description="Glycyl lysine isopeptide (Lys-Gly) (interchain with G-Cter in ubiquitin)" evidence="2">
    <location>
        <position position="784"/>
    </location>
</feature>
<feature type="cross-link" description="Glycyl lysine isopeptide (Lys-Gly) (interchain with G-Cter in ubiquitin)" evidence="2">
    <location>
        <position position="800"/>
    </location>
</feature>